<proteinExistence type="inferred from homology"/>
<feature type="chain" id="PRO_0000321114" description="Aspartate carbamoyltransferase catalytic subunit">
    <location>
        <begin position="1"/>
        <end position="308"/>
    </location>
</feature>
<feature type="binding site" evidence="1">
    <location>
        <position position="57"/>
    </location>
    <ligand>
        <name>carbamoyl phosphate</name>
        <dbReference type="ChEBI" id="CHEBI:58228"/>
    </ligand>
</feature>
<feature type="binding site" evidence="1">
    <location>
        <position position="58"/>
    </location>
    <ligand>
        <name>carbamoyl phosphate</name>
        <dbReference type="ChEBI" id="CHEBI:58228"/>
    </ligand>
</feature>
<feature type="binding site" evidence="1">
    <location>
        <position position="86"/>
    </location>
    <ligand>
        <name>L-aspartate</name>
        <dbReference type="ChEBI" id="CHEBI:29991"/>
    </ligand>
</feature>
<feature type="binding site" evidence="1">
    <location>
        <position position="107"/>
    </location>
    <ligand>
        <name>carbamoyl phosphate</name>
        <dbReference type="ChEBI" id="CHEBI:58228"/>
    </ligand>
</feature>
<feature type="binding site" evidence="1">
    <location>
        <position position="135"/>
    </location>
    <ligand>
        <name>carbamoyl phosphate</name>
        <dbReference type="ChEBI" id="CHEBI:58228"/>
    </ligand>
</feature>
<feature type="binding site" evidence="1">
    <location>
        <position position="138"/>
    </location>
    <ligand>
        <name>carbamoyl phosphate</name>
        <dbReference type="ChEBI" id="CHEBI:58228"/>
    </ligand>
</feature>
<feature type="binding site" evidence="1">
    <location>
        <position position="168"/>
    </location>
    <ligand>
        <name>L-aspartate</name>
        <dbReference type="ChEBI" id="CHEBI:29991"/>
    </ligand>
</feature>
<feature type="binding site" evidence="1">
    <location>
        <position position="228"/>
    </location>
    <ligand>
        <name>L-aspartate</name>
        <dbReference type="ChEBI" id="CHEBI:29991"/>
    </ligand>
</feature>
<feature type="binding site" evidence="1">
    <location>
        <position position="267"/>
    </location>
    <ligand>
        <name>carbamoyl phosphate</name>
        <dbReference type="ChEBI" id="CHEBI:58228"/>
    </ligand>
</feature>
<feature type="binding site" evidence="1">
    <location>
        <position position="268"/>
    </location>
    <ligand>
        <name>carbamoyl phosphate</name>
        <dbReference type="ChEBI" id="CHEBI:58228"/>
    </ligand>
</feature>
<name>PYRB_LEPBJ</name>
<dbReference type="EC" id="2.1.3.2" evidence="1"/>
<dbReference type="EMBL" id="CP000350">
    <property type="protein sequence ID" value="ABJ75403.1"/>
    <property type="molecule type" value="Genomic_DNA"/>
</dbReference>
<dbReference type="RefSeq" id="WP_011670737.1">
    <property type="nucleotide sequence ID" value="NC_008510.1"/>
</dbReference>
<dbReference type="SMR" id="Q04UL7"/>
<dbReference type="KEGG" id="lbj:LBJ_0731"/>
<dbReference type="HOGENOM" id="CLU_043846_1_2_12"/>
<dbReference type="UniPathway" id="UPA00070">
    <property type="reaction ID" value="UER00116"/>
</dbReference>
<dbReference type="Proteomes" id="UP000000656">
    <property type="component" value="Chromosome 1"/>
</dbReference>
<dbReference type="GO" id="GO:0016597">
    <property type="term" value="F:amino acid binding"/>
    <property type="evidence" value="ECO:0007669"/>
    <property type="project" value="InterPro"/>
</dbReference>
<dbReference type="GO" id="GO:0004070">
    <property type="term" value="F:aspartate carbamoyltransferase activity"/>
    <property type="evidence" value="ECO:0007669"/>
    <property type="project" value="UniProtKB-UniRule"/>
</dbReference>
<dbReference type="GO" id="GO:0006207">
    <property type="term" value="P:'de novo' pyrimidine nucleobase biosynthetic process"/>
    <property type="evidence" value="ECO:0007669"/>
    <property type="project" value="InterPro"/>
</dbReference>
<dbReference type="GO" id="GO:0044205">
    <property type="term" value="P:'de novo' UMP biosynthetic process"/>
    <property type="evidence" value="ECO:0007669"/>
    <property type="project" value="UniProtKB-UniRule"/>
</dbReference>
<dbReference type="GO" id="GO:0006520">
    <property type="term" value="P:amino acid metabolic process"/>
    <property type="evidence" value="ECO:0007669"/>
    <property type="project" value="InterPro"/>
</dbReference>
<dbReference type="FunFam" id="3.40.50.1370:FF:000021">
    <property type="entry name" value="Aspartate carbamoyltransferase"/>
    <property type="match status" value="1"/>
</dbReference>
<dbReference type="Gene3D" id="3.40.50.1370">
    <property type="entry name" value="Aspartate/ornithine carbamoyltransferase"/>
    <property type="match status" value="2"/>
</dbReference>
<dbReference type="HAMAP" id="MF_00001">
    <property type="entry name" value="Asp_carb_tr"/>
    <property type="match status" value="1"/>
</dbReference>
<dbReference type="InterPro" id="IPR006132">
    <property type="entry name" value="Asp/Orn_carbamoyltranf_P-bd"/>
</dbReference>
<dbReference type="InterPro" id="IPR006130">
    <property type="entry name" value="Asp/Orn_carbamoylTrfase"/>
</dbReference>
<dbReference type="InterPro" id="IPR036901">
    <property type="entry name" value="Asp/Orn_carbamoylTrfase_sf"/>
</dbReference>
<dbReference type="InterPro" id="IPR002082">
    <property type="entry name" value="Asp_carbamoyltransf"/>
</dbReference>
<dbReference type="InterPro" id="IPR006131">
    <property type="entry name" value="Asp_carbamoyltransf_Asp/Orn-bd"/>
</dbReference>
<dbReference type="NCBIfam" id="TIGR00670">
    <property type="entry name" value="asp_carb_tr"/>
    <property type="match status" value="1"/>
</dbReference>
<dbReference type="NCBIfam" id="NF002032">
    <property type="entry name" value="PRK00856.1"/>
    <property type="match status" value="1"/>
</dbReference>
<dbReference type="PANTHER" id="PTHR45753:SF6">
    <property type="entry name" value="ASPARTATE CARBAMOYLTRANSFERASE"/>
    <property type="match status" value="1"/>
</dbReference>
<dbReference type="PANTHER" id="PTHR45753">
    <property type="entry name" value="ORNITHINE CARBAMOYLTRANSFERASE, MITOCHONDRIAL"/>
    <property type="match status" value="1"/>
</dbReference>
<dbReference type="Pfam" id="PF00185">
    <property type="entry name" value="OTCace"/>
    <property type="match status" value="1"/>
</dbReference>
<dbReference type="Pfam" id="PF02729">
    <property type="entry name" value="OTCace_N"/>
    <property type="match status" value="1"/>
</dbReference>
<dbReference type="PRINTS" id="PR00100">
    <property type="entry name" value="AOTCASE"/>
</dbReference>
<dbReference type="PRINTS" id="PR00101">
    <property type="entry name" value="ATCASE"/>
</dbReference>
<dbReference type="SUPFAM" id="SSF53671">
    <property type="entry name" value="Aspartate/ornithine carbamoyltransferase"/>
    <property type="match status" value="1"/>
</dbReference>
<dbReference type="PROSITE" id="PS00097">
    <property type="entry name" value="CARBAMOYLTRANSFERASE"/>
    <property type="match status" value="1"/>
</dbReference>
<organism>
    <name type="scientific">Leptospira borgpetersenii serovar Hardjo-bovis (strain JB197)</name>
    <dbReference type="NCBI Taxonomy" id="355277"/>
    <lineage>
        <taxon>Bacteria</taxon>
        <taxon>Pseudomonadati</taxon>
        <taxon>Spirochaetota</taxon>
        <taxon>Spirochaetia</taxon>
        <taxon>Leptospirales</taxon>
        <taxon>Leptospiraceae</taxon>
        <taxon>Leptospira</taxon>
    </lineage>
</organism>
<reference key="1">
    <citation type="journal article" date="2006" name="Proc. Natl. Acad. Sci. U.S.A.">
        <title>Genome reduction in Leptospira borgpetersenii reflects limited transmission potential.</title>
        <authorList>
            <person name="Bulach D.M."/>
            <person name="Zuerner R.L."/>
            <person name="Wilson P."/>
            <person name="Seemann T."/>
            <person name="McGrath A."/>
            <person name="Cullen P.A."/>
            <person name="Davis J."/>
            <person name="Johnson M."/>
            <person name="Kuczek E."/>
            <person name="Alt D.P."/>
            <person name="Peterson-Burch B."/>
            <person name="Coppel R.L."/>
            <person name="Rood J.I."/>
            <person name="Davies J.K."/>
            <person name="Adler B."/>
        </authorList>
    </citation>
    <scope>NUCLEOTIDE SEQUENCE [LARGE SCALE GENOMIC DNA]</scope>
    <source>
        <strain>JB197</strain>
    </source>
</reference>
<accession>Q04UL7</accession>
<comment type="function">
    <text evidence="1">Catalyzes the condensation of carbamoyl phosphate and aspartate to form carbamoyl aspartate and inorganic phosphate, the committed step in the de novo pyrimidine nucleotide biosynthesis pathway.</text>
</comment>
<comment type="catalytic activity">
    <reaction evidence="1">
        <text>carbamoyl phosphate + L-aspartate = N-carbamoyl-L-aspartate + phosphate + H(+)</text>
        <dbReference type="Rhea" id="RHEA:20013"/>
        <dbReference type="ChEBI" id="CHEBI:15378"/>
        <dbReference type="ChEBI" id="CHEBI:29991"/>
        <dbReference type="ChEBI" id="CHEBI:32814"/>
        <dbReference type="ChEBI" id="CHEBI:43474"/>
        <dbReference type="ChEBI" id="CHEBI:58228"/>
        <dbReference type="EC" id="2.1.3.2"/>
    </reaction>
</comment>
<comment type="pathway">
    <text evidence="1">Pyrimidine metabolism; UMP biosynthesis via de novo pathway; (S)-dihydroorotate from bicarbonate: step 2/3.</text>
</comment>
<comment type="subunit">
    <text evidence="1">Heterododecamer (2C3:3R2) of six catalytic PyrB chains organized as two trimers (C3), and six regulatory PyrI chains organized as three dimers (R2).</text>
</comment>
<comment type="similarity">
    <text evidence="1">Belongs to the aspartate/ornithine carbamoyltransferase superfamily. ATCase family.</text>
</comment>
<keyword id="KW-0665">Pyrimidine biosynthesis</keyword>
<keyword id="KW-0808">Transferase</keyword>
<evidence type="ECO:0000255" key="1">
    <source>
        <dbReference type="HAMAP-Rule" id="MF_00001"/>
    </source>
</evidence>
<protein>
    <recommendedName>
        <fullName evidence="1">Aspartate carbamoyltransferase catalytic subunit</fullName>
        <ecNumber evidence="1">2.1.3.2</ecNumber>
    </recommendedName>
    <alternativeName>
        <fullName evidence="1">Aspartate transcarbamylase</fullName>
        <shortName evidence="1">ATCase</shortName>
    </alternativeName>
</protein>
<sequence length="308" mass="34722">MSYNHKNVLDTEQFSKSDLDFLIKKIKDMEHLVERHKAFGILTGKLLASLFFEASTRTRLSFEAAMERLGGRVISTVGFQFSSISKGETLYDTMKMVEAYADIAVIRHPVEGSSRIAAGAVKIPVVNAGDGAGQHPTQAILDLYTIISEKGTLDGLSVAFIGDLKYGRTIHSLINLLRHYKVRLYLISPIELALPDSYKKGLEGYPLTLEETTDIKAVWECDVAYVTRIQEERFPDHKEYERLKDLFKINKELILASKKETTILHPLPRVNELSTDVDDLPNAAYFRQARYGVVSRMTLLCLCLGQDF</sequence>
<gene>
    <name evidence="1" type="primary">pyrB</name>
    <name type="ordered locus">LBJ_0731</name>
</gene>